<proteinExistence type="inferred from homology"/>
<keyword id="KW-0028">Amino-acid biosynthesis</keyword>
<keyword id="KW-0963">Cytoplasm</keyword>
<keyword id="KW-0521">NADP</keyword>
<keyword id="KW-0560">Oxidoreductase</keyword>
<keyword id="KW-0641">Proline biosynthesis</keyword>
<keyword id="KW-1185">Reference proteome</keyword>
<gene>
    <name evidence="1" type="primary">proA</name>
    <name type="ordered locus">DP2588</name>
</gene>
<comment type="function">
    <text evidence="1">Catalyzes the NADPH-dependent reduction of L-glutamate 5-phosphate into L-glutamate 5-semialdehyde and phosphate. The product spontaneously undergoes cyclization to form 1-pyrroline-5-carboxylate.</text>
</comment>
<comment type="catalytic activity">
    <reaction evidence="1">
        <text>L-glutamate 5-semialdehyde + phosphate + NADP(+) = L-glutamyl 5-phosphate + NADPH + H(+)</text>
        <dbReference type="Rhea" id="RHEA:19541"/>
        <dbReference type="ChEBI" id="CHEBI:15378"/>
        <dbReference type="ChEBI" id="CHEBI:43474"/>
        <dbReference type="ChEBI" id="CHEBI:57783"/>
        <dbReference type="ChEBI" id="CHEBI:58066"/>
        <dbReference type="ChEBI" id="CHEBI:58274"/>
        <dbReference type="ChEBI" id="CHEBI:58349"/>
        <dbReference type="EC" id="1.2.1.41"/>
    </reaction>
</comment>
<comment type="pathway">
    <text evidence="1">Amino-acid biosynthesis; L-proline biosynthesis; L-glutamate 5-semialdehyde from L-glutamate: step 2/2.</text>
</comment>
<comment type="subcellular location">
    <subcellularLocation>
        <location evidence="1">Cytoplasm</location>
    </subcellularLocation>
</comment>
<comment type="similarity">
    <text evidence="1">Belongs to the gamma-glutamyl phosphate reductase family.</text>
</comment>
<organism>
    <name type="scientific">Desulfotalea psychrophila (strain LSv54 / DSM 12343)</name>
    <dbReference type="NCBI Taxonomy" id="177439"/>
    <lineage>
        <taxon>Bacteria</taxon>
        <taxon>Pseudomonadati</taxon>
        <taxon>Thermodesulfobacteriota</taxon>
        <taxon>Desulfobulbia</taxon>
        <taxon>Desulfobulbales</taxon>
        <taxon>Desulfocapsaceae</taxon>
        <taxon>Desulfotalea</taxon>
    </lineage>
</organism>
<protein>
    <recommendedName>
        <fullName evidence="1">Gamma-glutamyl phosphate reductase</fullName>
        <shortName evidence="1">GPR</shortName>
        <ecNumber evidence="1">1.2.1.41</ecNumber>
    </recommendedName>
    <alternativeName>
        <fullName evidence="1">Glutamate-5-semialdehyde dehydrogenase</fullName>
    </alternativeName>
    <alternativeName>
        <fullName evidence="1">Glutamyl-gamma-semialdehyde dehydrogenase</fullName>
        <shortName evidence="1">GSA dehydrogenase</shortName>
    </alternativeName>
</protein>
<feature type="chain" id="PRO_0000189721" description="Gamma-glutamyl phosphate reductase">
    <location>
        <begin position="1"/>
        <end position="418"/>
    </location>
</feature>
<evidence type="ECO:0000255" key="1">
    <source>
        <dbReference type="HAMAP-Rule" id="MF_00412"/>
    </source>
</evidence>
<dbReference type="EC" id="1.2.1.41" evidence="1"/>
<dbReference type="EMBL" id="CR522870">
    <property type="protein sequence ID" value="CAG37317.1"/>
    <property type="molecule type" value="Genomic_DNA"/>
</dbReference>
<dbReference type="RefSeq" id="WP_011189829.1">
    <property type="nucleotide sequence ID" value="NC_006138.1"/>
</dbReference>
<dbReference type="SMR" id="Q6AK09"/>
<dbReference type="STRING" id="177439.DP2588"/>
<dbReference type="KEGG" id="dps:DP2588"/>
<dbReference type="eggNOG" id="COG0014">
    <property type="taxonomic scope" value="Bacteria"/>
</dbReference>
<dbReference type="HOGENOM" id="CLU_030231_0_0_7"/>
<dbReference type="OrthoDB" id="9809970at2"/>
<dbReference type="UniPathway" id="UPA00098">
    <property type="reaction ID" value="UER00360"/>
</dbReference>
<dbReference type="Proteomes" id="UP000000602">
    <property type="component" value="Chromosome"/>
</dbReference>
<dbReference type="GO" id="GO:0005737">
    <property type="term" value="C:cytoplasm"/>
    <property type="evidence" value="ECO:0007669"/>
    <property type="project" value="UniProtKB-SubCell"/>
</dbReference>
<dbReference type="GO" id="GO:0004350">
    <property type="term" value="F:glutamate-5-semialdehyde dehydrogenase activity"/>
    <property type="evidence" value="ECO:0007669"/>
    <property type="project" value="UniProtKB-UniRule"/>
</dbReference>
<dbReference type="GO" id="GO:0050661">
    <property type="term" value="F:NADP binding"/>
    <property type="evidence" value="ECO:0007669"/>
    <property type="project" value="InterPro"/>
</dbReference>
<dbReference type="GO" id="GO:0055129">
    <property type="term" value="P:L-proline biosynthetic process"/>
    <property type="evidence" value="ECO:0007669"/>
    <property type="project" value="UniProtKB-UniRule"/>
</dbReference>
<dbReference type="CDD" id="cd07079">
    <property type="entry name" value="ALDH_F18-19_ProA-GPR"/>
    <property type="match status" value="1"/>
</dbReference>
<dbReference type="FunFam" id="3.40.309.10:FF:000006">
    <property type="entry name" value="Gamma-glutamyl phosphate reductase"/>
    <property type="match status" value="1"/>
</dbReference>
<dbReference type="Gene3D" id="3.40.605.10">
    <property type="entry name" value="Aldehyde Dehydrogenase, Chain A, domain 1"/>
    <property type="match status" value="1"/>
</dbReference>
<dbReference type="Gene3D" id="3.40.309.10">
    <property type="entry name" value="Aldehyde Dehydrogenase, Chain A, domain 2"/>
    <property type="match status" value="1"/>
</dbReference>
<dbReference type="HAMAP" id="MF_00412">
    <property type="entry name" value="ProA"/>
    <property type="match status" value="1"/>
</dbReference>
<dbReference type="InterPro" id="IPR016161">
    <property type="entry name" value="Ald_DH/histidinol_DH"/>
</dbReference>
<dbReference type="InterPro" id="IPR016163">
    <property type="entry name" value="Ald_DH_C"/>
</dbReference>
<dbReference type="InterPro" id="IPR016162">
    <property type="entry name" value="Ald_DH_N"/>
</dbReference>
<dbReference type="InterPro" id="IPR015590">
    <property type="entry name" value="Aldehyde_DH_dom"/>
</dbReference>
<dbReference type="InterPro" id="IPR020593">
    <property type="entry name" value="G-glutamylP_reductase_CS"/>
</dbReference>
<dbReference type="InterPro" id="IPR012134">
    <property type="entry name" value="Glu-5-SA_DH"/>
</dbReference>
<dbReference type="InterPro" id="IPR000965">
    <property type="entry name" value="GPR_dom"/>
</dbReference>
<dbReference type="NCBIfam" id="NF001221">
    <property type="entry name" value="PRK00197.1"/>
    <property type="match status" value="1"/>
</dbReference>
<dbReference type="NCBIfam" id="TIGR00407">
    <property type="entry name" value="proA"/>
    <property type="match status" value="1"/>
</dbReference>
<dbReference type="PANTHER" id="PTHR11063:SF8">
    <property type="entry name" value="DELTA-1-PYRROLINE-5-CARBOXYLATE SYNTHASE"/>
    <property type="match status" value="1"/>
</dbReference>
<dbReference type="PANTHER" id="PTHR11063">
    <property type="entry name" value="GLUTAMATE SEMIALDEHYDE DEHYDROGENASE"/>
    <property type="match status" value="1"/>
</dbReference>
<dbReference type="Pfam" id="PF00171">
    <property type="entry name" value="Aldedh"/>
    <property type="match status" value="1"/>
</dbReference>
<dbReference type="PIRSF" id="PIRSF000151">
    <property type="entry name" value="GPR"/>
    <property type="match status" value="1"/>
</dbReference>
<dbReference type="SUPFAM" id="SSF53720">
    <property type="entry name" value="ALDH-like"/>
    <property type="match status" value="1"/>
</dbReference>
<dbReference type="PROSITE" id="PS01223">
    <property type="entry name" value="PROA"/>
    <property type="match status" value="1"/>
</dbReference>
<name>PROA_DESPS</name>
<sequence length="418" mass="44792">MTLEETIVEVGVRAKAAAADLMSLATRQKDAVLSQVGELLVAEKAFLQEENEKDLAAGREKGLSDAMLDRLALTDSVIESMVKGLKEVIALPDPVGRTLGSVKRPNGLSVGRMCVPLGVIAMIYESRPNVTIDAAALCLKAGNAIILRGGSEAIHSNLALASILRRALEEAEVNPDSVQVIPMIDREAITIMLGLEDSIDLVIPRGGEGLIRFVSKNSSIPVLKHYKGVCHAYIDKDADLAKVAPIVINAKTQRPGVCNALEGILIHEDIVADVLPGLATELAELGVEMRGCSQSLPFSEHIVAASEEDWGTEFLRLCLCVKVVRSFEDAKSYIRKYGSQHTEAIITENYTTAHRFVAEVDASAVVVNASTRFNDGGELGLGAEIGISTTKLHAYGPMGLEELTTKKFVILGDGQIRS</sequence>
<accession>Q6AK09</accession>
<reference key="1">
    <citation type="journal article" date="2004" name="Environ. Microbiol.">
        <title>The genome of Desulfotalea psychrophila, a sulfate-reducing bacterium from permanently cold Arctic sediments.</title>
        <authorList>
            <person name="Rabus R."/>
            <person name="Ruepp A."/>
            <person name="Frickey T."/>
            <person name="Rattei T."/>
            <person name="Fartmann B."/>
            <person name="Stark M."/>
            <person name="Bauer M."/>
            <person name="Zibat A."/>
            <person name="Lombardot T."/>
            <person name="Becker I."/>
            <person name="Amann J."/>
            <person name="Gellner K."/>
            <person name="Teeling H."/>
            <person name="Leuschner W.D."/>
            <person name="Gloeckner F.-O."/>
            <person name="Lupas A.N."/>
            <person name="Amann R."/>
            <person name="Klenk H.-P."/>
        </authorList>
    </citation>
    <scope>NUCLEOTIDE SEQUENCE [LARGE SCALE GENOMIC DNA]</scope>
    <source>
        <strain>DSM 12343 / LSv54</strain>
    </source>
</reference>